<comment type="similarity">
    <text evidence="1">Belongs to the universal ribosomal protein uS2 family.</text>
</comment>
<protein>
    <recommendedName>
        <fullName evidence="1">Small ribosomal subunit protein uS2</fullName>
    </recommendedName>
    <alternativeName>
        <fullName evidence="3">30S ribosomal protein S2</fullName>
    </alternativeName>
</protein>
<evidence type="ECO:0000255" key="1">
    <source>
        <dbReference type="HAMAP-Rule" id="MF_00291"/>
    </source>
</evidence>
<evidence type="ECO:0000256" key="2">
    <source>
        <dbReference type="SAM" id="MobiDB-lite"/>
    </source>
</evidence>
<evidence type="ECO:0000305" key="3"/>
<name>RS2_RHOJR</name>
<reference key="1">
    <citation type="journal article" date="2006" name="Proc. Natl. Acad. Sci. U.S.A.">
        <title>The complete genome of Rhodococcus sp. RHA1 provides insights into a catabolic powerhouse.</title>
        <authorList>
            <person name="McLeod M.P."/>
            <person name="Warren R.L."/>
            <person name="Hsiao W.W.L."/>
            <person name="Araki N."/>
            <person name="Myhre M."/>
            <person name="Fernandes C."/>
            <person name="Miyazawa D."/>
            <person name="Wong W."/>
            <person name="Lillquist A.L."/>
            <person name="Wang D."/>
            <person name="Dosanjh M."/>
            <person name="Hara H."/>
            <person name="Petrescu A."/>
            <person name="Morin R.D."/>
            <person name="Yang G."/>
            <person name="Stott J.M."/>
            <person name="Schein J.E."/>
            <person name="Shin H."/>
            <person name="Smailus D."/>
            <person name="Siddiqui A.S."/>
            <person name="Marra M.A."/>
            <person name="Jones S.J.M."/>
            <person name="Holt R."/>
            <person name="Brinkman F.S.L."/>
            <person name="Miyauchi K."/>
            <person name="Fukuda M."/>
            <person name="Davies J.E."/>
            <person name="Mohn W.W."/>
            <person name="Eltis L.D."/>
        </authorList>
    </citation>
    <scope>NUCLEOTIDE SEQUENCE [LARGE SCALE GENOMIC DNA]</scope>
    <source>
        <strain>RHA1</strain>
    </source>
</reference>
<sequence>MAVVTMKQLLDSGTHFGHQTRRWNPKMKRFIFTDRNGIYIIDLQQTLTYIDKAYEFVKETVAHGGTVLFVGTKKQAQESIAAEATRVGMPYVNQRWLGGMLTNFTTVHKRLLRLKELEAMEQTGGFEGRTKKEILMLTREMTKLDRTLGGIRDMAKVPSAVWVVDTNKEHLAVAEARKLNIPVIAILDTNCDPDLVDYPIPGNDDAIRSAALLTKVVASAVAEGVQARAGLSADKDAKPEAGAGEPLAEWEQELLSQAAPAAEAAPAAEAAPAAEAAPAAEAQAAPAAEAPAAEAPSTEA</sequence>
<proteinExistence type="inferred from homology"/>
<feature type="chain" id="PRO_1000004052" description="Small ribosomal subunit protein uS2">
    <location>
        <begin position="1"/>
        <end position="300"/>
    </location>
</feature>
<feature type="region of interest" description="Disordered" evidence="2">
    <location>
        <begin position="228"/>
        <end position="300"/>
    </location>
</feature>
<feature type="compositionally biased region" description="Low complexity" evidence="2">
    <location>
        <begin position="258"/>
        <end position="300"/>
    </location>
</feature>
<dbReference type="EMBL" id="CP000431">
    <property type="protein sequence ID" value="ABG98351.1"/>
    <property type="molecule type" value="Genomic_DNA"/>
</dbReference>
<dbReference type="RefSeq" id="WP_011598428.1">
    <property type="nucleotide sequence ID" value="NC_008268.1"/>
</dbReference>
<dbReference type="SMR" id="Q0S285"/>
<dbReference type="KEGG" id="rha:RHA1_ro06578"/>
<dbReference type="PATRIC" id="fig|101510.16.peg.6633"/>
<dbReference type="eggNOG" id="COG0052">
    <property type="taxonomic scope" value="Bacteria"/>
</dbReference>
<dbReference type="HOGENOM" id="CLU_040318_2_3_11"/>
<dbReference type="OrthoDB" id="9808036at2"/>
<dbReference type="Proteomes" id="UP000008710">
    <property type="component" value="Chromosome"/>
</dbReference>
<dbReference type="GO" id="GO:0022627">
    <property type="term" value="C:cytosolic small ribosomal subunit"/>
    <property type="evidence" value="ECO:0007669"/>
    <property type="project" value="TreeGrafter"/>
</dbReference>
<dbReference type="GO" id="GO:0003735">
    <property type="term" value="F:structural constituent of ribosome"/>
    <property type="evidence" value="ECO:0007669"/>
    <property type="project" value="InterPro"/>
</dbReference>
<dbReference type="GO" id="GO:0006412">
    <property type="term" value="P:translation"/>
    <property type="evidence" value="ECO:0007669"/>
    <property type="project" value="UniProtKB-UniRule"/>
</dbReference>
<dbReference type="CDD" id="cd01425">
    <property type="entry name" value="RPS2"/>
    <property type="match status" value="1"/>
</dbReference>
<dbReference type="FunFam" id="1.10.287.610:FF:000001">
    <property type="entry name" value="30S ribosomal protein S2"/>
    <property type="match status" value="1"/>
</dbReference>
<dbReference type="Gene3D" id="3.40.50.10490">
    <property type="entry name" value="Glucose-6-phosphate isomerase like protein, domain 1"/>
    <property type="match status" value="1"/>
</dbReference>
<dbReference type="Gene3D" id="1.10.287.610">
    <property type="entry name" value="Helix hairpin bin"/>
    <property type="match status" value="1"/>
</dbReference>
<dbReference type="HAMAP" id="MF_00291_B">
    <property type="entry name" value="Ribosomal_uS2_B"/>
    <property type="match status" value="1"/>
</dbReference>
<dbReference type="InterPro" id="IPR001865">
    <property type="entry name" value="Ribosomal_uS2"/>
</dbReference>
<dbReference type="InterPro" id="IPR005706">
    <property type="entry name" value="Ribosomal_uS2_bac/mit/plastid"/>
</dbReference>
<dbReference type="InterPro" id="IPR018130">
    <property type="entry name" value="Ribosomal_uS2_CS"/>
</dbReference>
<dbReference type="InterPro" id="IPR023591">
    <property type="entry name" value="Ribosomal_uS2_flav_dom_sf"/>
</dbReference>
<dbReference type="NCBIfam" id="TIGR01011">
    <property type="entry name" value="rpsB_bact"/>
    <property type="match status" value="1"/>
</dbReference>
<dbReference type="PANTHER" id="PTHR12534">
    <property type="entry name" value="30S RIBOSOMAL PROTEIN S2 PROKARYOTIC AND ORGANELLAR"/>
    <property type="match status" value="1"/>
</dbReference>
<dbReference type="PANTHER" id="PTHR12534:SF0">
    <property type="entry name" value="SMALL RIBOSOMAL SUBUNIT PROTEIN US2M"/>
    <property type="match status" value="1"/>
</dbReference>
<dbReference type="Pfam" id="PF00318">
    <property type="entry name" value="Ribosomal_S2"/>
    <property type="match status" value="1"/>
</dbReference>
<dbReference type="PRINTS" id="PR00395">
    <property type="entry name" value="RIBOSOMALS2"/>
</dbReference>
<dbReference type="SUPFAM" id="SSF52313">
    <property type="entry name" value="Ribosomal protein S2"/>
    <property type="match status" value="1"/>
</dbReference>
<dbReference type="PROSITE" id="PS00962">
    <property type="entry name" value="RIBOSOMAL_S2_1"/>
    <property type="match status" value="1"/>
</dbReference>
<accession>Q0S285</accession>
<keyword id="KW-0687">Ribonucleoprotein</keyword>
<keyword id="KW-0689">Ribosomal protein</keyword>
<gene>
    <name evidence="1" type="primary">rpsB</name>
    <name type="ordered locus">RHA1_ro06578</name>
</gene>
<organism>
    <name type="scientific">Rhodococcus jostii (strain RHA1)</name>
    <dbReference type="NCBI Taxonomy" id="101510"/>
    <lineage>
        <taxon>Bacteria</taxon>
        <taxon>Bacillati</taxon>
        <taxon>Actinomycetota</taxon>
        <taxon>Actinomycetes</taxon>
        <taxon>Mycobacteriales</taxon>
        <taxon>Nocardiaceae</taxon>
        <taxon>Rhodococcus</taxon>
    </lineage>
</organism>